<organism>
    <name type="scientific">Streptococcus pneumoniae (strain Taiwan19F-14)</name>
    <dbReference type="NCBI Taxonomy" id="487213"/>
    <lineage>
        <taxon>Bacteria</taxon>
        <taxon>Bacillati</taxon>
        <taxon>Bacillota</taxon>
        <taxon>Bacilli</taxon>
        <taxon>Lactobacillales</taxon>
        <taxon>Streptococcaceae</taxon>
        <taxon>Streptococcus</taxon>
    </lineage>
</organism>
<proteinExistence type="inferred from homology"/>
<protein>
    <recommendedName>
        <fullName evidence="1">Large ribosomal subunit protein bL12</fullName>
    </recommendedName>
    <alternativeName>
        <fullName evidence="2">50S ribosomal protein L7/L12</fullName>
    </alternativeName>
</protein>
<comment type="function">
    <text evidence="1">Forms part of the ribosomal stalk which helps the ribosome interact with GTP-bound translation factors. Is thus essential for accurate translation.</text>
</comment>
<comment type="subunit">
    <text evidence="1">Homodimer. Part of the ribosomal stalk of the 50S ribosomal subunit. Forms a multimeric L10(L12)X complex, where L10 forms an elongated spine to which 2 to 4 L12 dimers bind in a sequential fashion. Binds GTP-bound translation factors.</text>
</comment>
<comment type="similarity">
    <text evidence="1">Belongs to the bacterial ribosomal protein bL12 family.</text>
</comment>
<accession>C1CR01</accession>
<name>RL7_STRZT</name>
<reference key="1">
    <citation type="journal article" date="2010" name="Genome Biol.">
        <title>Structure and dynamics of the pan-genome of Streptococcus pneumoniae and closely related species.</title>
        <authorList>
            <person name="Donati C."/>
            <person name="Hiller N.L."/>
            <person name="Tettelin H."/>
            <person name="Muzzi A."/>
            <person name="Croucher N.J."/>
            <person name="Angiuoli S.V."/>
            <person name="Oggioni M."/>
            <person name="Dunning Hotopp J.C."/>
            <person name="Hu F.Z."/>
            <person name="Riley D.R."/>
            <person name="Covacci A."/>
            <person name="Mitchell T.J."/>
            <person name="Bentley S.D."/>
            <person name="Kilian M."/>
            <person name="Ehrlich G.D."/>
            <person name="Rappuoli R."/>
            <person name="Moxon E.R."/>
            <person name="Masignani V."/>
        </authorList>
    </citation>
    <scope>NUCLEOTIDE SEQUENCE [LARGE SCALE GENOMIC DNA]</scope>
    <source>
        <strain>Taiwan19F-14</strain>
    </source>
</reference>
<gene>
    <name evidence="1" type="primary">rplL</name>
    <name type="ordered locus">SPT_0921</name>
</gene>
<dbReference type="EMBL" id="CP000921">
    <property type="protein sequence ID" value="ACO22736.1"/>
    <property type="molecule type" value="Genomic_DNA"/>
</dbReference>
<dbReference type="RefSeq" id="WP_001196960.1">
    <property type="nucleotide sequence ID" value="NC_012469.1"/>
</dbReference>
<dbReference type="SMR" id="C1CR01"/>
<dbReference type="GeneID" id="45653386"/>
<dbReference type="KEGG" id="snt:SPT_0921"/>
<dbReference type="HOGENOM" id="CLU_086499_3_2_9"/>
<dbReference type="GO" id="GO:0022625">
    <property type="term" value="C:cytosolic large ribosomal subunit"/>
    <property type="evidence" value="ECO:0007669"/>
    <property type="project" value="TreeGrafter"/>
</dbReference>
<dbReference type="GO" id="GO:0003729">
    <property type="term" value="F:mRNA binding"/>
    <property type="evidence" value="ECO:0007669"/>
    <property type="project" value="TreeGrafter"/>
</dbReference>
<dbReference type="GO" id="GO:0003735">
    <property type="term" value="F:structural constituent of ribosome"/>
    <property type="evidence" value="ECO:0007669"/>
    <property type="project" value="InterPro"/>
</dbReference>
<dbReference type="GO" id="GO:0006412">
    <property type="term" value="P:translation"/>
    <property type="evidence" value="ECO:0007669"/>
    <property type="project" value="UniProtKB-UniRule"/>
</dbReference>
<dbReference type="CDD" id="cd00387">
    <property type="entry name" value="Ribosomal_L7_L12"/>
    <property type="match status" value="1"/>
</dbReference>
<dbReference type="FunFam" id="1.20.5.710:FF:000002">
    <property type="entry name" value="50S ribosomal protein L7/L12"/>
    <property type="match status" value="1"/>
</dbReference>
<dbReference type="FunFam" id="3.30.1390.10:FF:000001">
    <property type="entry name" value="50S ribosomal protein L7/L12"/>
    <property type="match status" value="1"/>
</dbReference>
<dbReference type="Gene3D" id="3.30.1390.10">
    <property type="match status" value="1"/>
</dbReference>
<dbReference type="Gene3D" id="1.20.5.710">
    <property type="entry name" value="Single helix bin"/>
    <property type="match status" value="1"/>
</dbReference>
<dbReference type="HAMAP" id="MF_00368">
    <property type="entry name" value="Ribosomal_bL12"/>
    <property type="match status" value="1"/>
</dbReference>
<dbReference type="InterPro" id="IPR000206">
    <property type="entry name" value="Ribosomal_bL12"/>
</dbReference>
<dbReference type="InterPro" id="IPR013823">
    <property type="entry name" value="Ribosomal_bL12_C"/>
</dbReference>
<dbReference type="InterPro" id="IPR014719">
    <property type="entry name" value="Ribosomal_bL12_C/ClpS-like"/>
</dbReference>
<dbReference type="InterPro" id="IPR008932">
    <property type="entry name" value="Ribosomal_bL12_oligo"/>
</dbReference>
<dbReference type="InterPro" id="IPR036235">
    <property type="entry name" value="Ribosomal_bL12_oligo_N_sf"/>
</dbReference>
<dbReference type="NCBIfam" id="TIGR00855">
    <property type="entry name" value="L12"/>
    <property type="match status" value="1"/>
</dbReference>
<dbReference type="PANTHER" id="PTHR45987">
    <property type="entry name" value="39S RIBOSOMAL PROTEIN L12"/>
    <property type="match status" value="1"/>
</dbReference>
<dbReference type="PANTHER" id="PTHR45987:SF4">
    <property type="entry name" value="LARGE RIBOSOMAL SUBUNIT PROTEIN BL12M"/>
    <property type="match status" value="1"/>
</dbReference>
<dbReference type="Pfam" id="PF00542">
    <property type="entry name" value="Ribosomal_L12"/>
    <property type="match status" value="1"/>
</dbReference>
<dbReference type="Pfam" id="PF16320">
    <property type="entry name" value="Ribosomal_L12_N"/>
    <property type="match status" value="1"/>
</dbReference>
<dbReference type="SUPFAM" id="SSF54736">
    <property type="entry name" value="ClpS-like"/>
    <property type="match status" value="1"/>
</dbReference>
<dbReference type="SUPFAM" id="SSF48300">
    <property type="entry name" value="Ribosomal protein L7/12, oligomerisation (N-terminal) domain"/>
    <property type="match status" value="1"/>
</dbReference>
<feature type="chain" id="PRO_1000195822" description="Large ribosomal subunit protein bL12">
    <location>
        <begin position="1"/>
        <end position="122"/>
    </location>
</feature>
<evidence type="ECO:0000255" key="1">
    <source>
        <dbReference type="HAMAP-Rule" id="MF_00368"/>
    </source>
</evidence>
<evidence type="ECO:0000305" key="2"/>
<keyword id="KW-0687">Ribonucleoprotein</keyword>
<keyword id="KW-0689">Ribosomal protein</keyword>
<sequence>MALNIENIIAEIKEASILELNDLVKAIEEEFGVTAAAPVAVAAADAADAGAAKDSFDVELTSAGDKKVGVIKVVREITGLGLKEAKELVDGAPALVKEGVATAEAEEIKAKLEEAGASVTLK</sequence>